<sequence>MRSRSLLLVALATLLLHASASASDDDLDYLIDNADDIPANDPDGWLQEGSPDDDDDDDLFHHGQAQDHPIDETHVFLLSAANFSDFLASHRHVMVEFYAPWCAHCQALAPDYAAAAADLSPLAHQVALAKVDATEDTDLAQKYDVQGFPTILFFIDGVPKDYNGARTKEAIVSWVNKKLAPGVQNITTVDEAEKILTGEDKAILAVLDSLSGAHSDEIAAASRLEDAINFYQTSNPDVAKLFHLDPAAKRPSLVLLKKQEEEKLTFYDGPFKASAIADFVSANKLPLVNTLTQETAPSIFDNPIKKQILLFVVANESSKFLPIFKEASKSFKGKLLFVFVERDNEEVGEPVANYFGITGQETTVLAYTGNEDARNFFLDGEISVENIKRFAEDFLEEKLTPFYKSEPVPESNEGDVKIVVGKNLDQIVLDESKDALLEIYAPWCGHCQELEPTYNKLGKHLRGIDSLVIAKMDGTANEHPRAKPDGFPTILFYPAGKKSFEPITFEGDRTVVEMYKFIKKHASIPFKLKRPDSSATKTEKDQSTASTNLRGERSSGTNFKDEL</sequence>
<accession>Q67IX6</accession>
<accession>A0A0P0VDI0</accession>
<comment type="function">
    <text evidence="1">Acts as a protein-folding catalyst that interacts with nascent polypeptides to catalyze the formation, isomerization, and reduction or oxidation of disulfide bonds. May play a role in storage protein biogenesis (By similarity).</text>
</comment>
<comment type="catalytic activity">
    <reaction>
        <text>Catalyzes the rearrangement of -S-S- bonds in proteins.</text>
        <dbReference type="EC" id="5.3.4.1"/>
    </reaction>
</comment>
<comment type="subcellular location">
    <subcellularLocation>
        <location evidence="6">Endoplasmic reticulum lumen</location>
    </subcellularLocation>
</comment>
<comment type="similarity">
    <text evidence="6">Belongs to the protein disulfide isomerase family.</text>
</comment>
<evidence type="ECO:0000250" key="1"/>
<evidence type="ECO:0000255" key="2"/>
<evidence type="ECO:0000255" key="3">
    <source>
        <dbReference type="PROSITE-ProRule" id="PRU00691"/>
    </source>
</evidence>
<evidence type="ECO:0000255" key="4">
    <source>
        <dbReference type="PROSITE-ProRule" id="PRU10138"/>
    </source>
</evidence>
<evidence type="ECO:0000256" key="5">
    <source>
        <dbReference type="SAM" id="MobiDB-lite"/>
    </source>
</evidence>
<evidence type="ECO:0000305" key="6"/>
<organism>
    <name type="scientific">Oryza sativa subsp. japonica</name>
    <name type="common">Rice</name>
    <dbReference type="NCBI Taxonomy" id="39947"/>
    <lineage>
        <taxon>Eukaryota</taxon>
        <taxon>Viridiplantae</taxon>
        <taxon>Streptophyta</taxon>
        <taxon>Embryophyta</taxon>
        <taxon>Tracheophyta</taxon>
        <taxon>Spermatophyta</taxon>
        <taxon>Magnoliopsida</taxon>
        <taxon>Liliopsida</taxon>
        <taxon>Poales</taxon>
        <taxon>Poaceae</taxon>
        <taxon>BOP clade</taxon>
        <taxon>Oryzoideae</taxon>
        <taxon>Oryzeae</taxon>
        <taxon>Oryzinae</taxon>
        <taxon>Oryza</taxon>
        <taxon>Oryza sativa</taxon>
    </lineage>
</organism>
<protein>
    <recommendedName>
        <fullName>Protein disulfide isomerase-like 1-4</fullName>
        <shortName>OsPDIL1-4</shortName>
        <ecNumber>5.3.4.1</ecNumber>
    </recommendedName>
    <alternativeName>
        <fullName>Protein disulfide isomerase-like 2-1</fullName>
        <shortName>OsPDIL2-1</shortName>
    </alternativeName>
</protein>
<feature type="signal peptide" evidence="2">
    <location>
        <begin position="1"/>
        <end position="22"/>
    </location>
</feature>
<feature type="chain" id="PRO_0000400031" description="Protein disulfide isomerase-like 1-4">
    <location>
        <begin position="23"/>
        <end position="563"/>
    </location>
</feature>
<feature type="domain" description="Thioredoxin 1" evidence="3">
    <location>
        <begin position="46"/>
        <end position="180"/>
    </location>
</feature>
<feature type="domain" description="Thioredoxin 2" evidence="3">
    <location>
        <begin position="394"/>
        <end position="523"/>
    </location>
</feature>
<feature type="region of interest" description="Disordered" evidence="5">
    <location>
        <begin position="40"/>
        <end position="64"/>
    </location>
</feature>
<feature type="region of interest" description="Disordered" evidence="5">
    <location>
        <begin position="529"/>
        <end position="563"/>
    </location>
</feature>
<feature type="short sequence motif" description="Prevents secretion from ER" evidence="4">
    <location>
        <begin position="560"/>
        <end position="563"/>
    </location>
</feature>
<feature type="compositionally biased region" description="Basic and acidic residues" evidence="5">
    <location>
        <begin position="529"/>
        <end position="542"/>
    </location>
</feature>
<feature type="compositionally biased region" description="Polar residues" evidence="5">
    <location>
        <begin position="543"/>
        <end position="563"/>
    </location>
</feature>
<feature type="active site" description="Nucleophile" evidence="1">
    <location>
        <position position="102"/>
    </location>
</feature>
<feature type="active site" description="Nucleophile" evidence="1">
    <location>
        <position position="105"/>
    </location>
</feature>
<feature type="active site" description="Nucleophile" evidence="1">
    <location>
        <position position="444"/>
    </location>
</feature>
<feature type="active site" description="Nucleophile" evidence="1">
    <location>
        <position position="447"/>
    </location>
</feature>
<feature type="site" description="Lowers pKa of C-terminal Cys of first active site" evidence="1">
    <location>
        <position position="166"/>
    </location>
</feature>
<feature type="site" description="Contributes to redox potential value" evidence="1">
    <location>
        <position position="445"/>
    </location>
</feature>
<feature type="site" description="Contributes to redox potential value" evidence="1">
    <location>
        <position position="446"/>
    </location>
</feature>
<feature type="site" description="Lowers pKa of C-terminal Cys of second active site" evidence="1">
    <location>
        <position position="509"/>
    </location>
</feature>
<feature type="glycosylation site" description="N-linked (GlcNAc...) asparagine" evidence="2">
    <location>
        <position position="82"/>
    </location>
</feature>
<feature type="glycosylation site" description="N-linked (GlcNAc...) asparagine" evidence="2">
    <location>
        <position position="185"/>
    </location>
</feature>
<feature type="glycosylation site" description="N-linked (GlcNAc...) asparagine" evidence="2">
    <location>
        <position position="315"/>
    </location>
</feature>
<feature type="disulfide bond" description="Redox-active" evidence="3">
    <location>
        <begin position="102"/>
        <end position="105"/>
    </location>
</feature>
<feature type="disulfide bond" description="Redox-active" evidence="3">
    <location>
        <begin position="444"/>
        <end position="447"/>
    </location>
</feature>
<reference key="1">
    <citation type="journal article" date="2006" name="Plant J.">
        <title>Sequencing and characterization of telomere and subtelomere regions on rice chromosomes 1S, 2S, 2L, 6L, 7S, 7L and 8S.</title>
        <authorList>
            <person name="Mizuno H."/>
            <person name="Wu J."/>
            <person name="Kanamori H."/>
            <person name="Fujisawa M."/>
            <person name="Namiki N."/>
            <person name="Saji S."/>
            <person name="Katagiri S."/>
            <person name="Katayose Y."/>
            <person name="Sasaki T."/>
            <person name="Matsumoto T."/>
        </authorList>
    </citation>
    <scope>NUCLEOTIDE SEQUENCE [LARGE SCALE GENOMIC DNA]</scope>
    <source>
        <strain>cv. Nipponbare</strain>
    </source>
</reference>
<reference key="2">
    <citation type="journal article" date="2005" name="Nature">
        <title>The map-based sequence of the rice genome.</title>
        <authorList>
            <consortium name="International rice genome sequencing project (IRGSP)"/>
        </authorList>
    </citation>
    <scope>NUCLEOTIDE SEQUENCE [LARGE SCALE GENOMIC DNA]</scope>
    <source>
        <strain>cv. Nipponbare</strain>
    </source>
</reference>
<reference key="3">
    <citation type="journal article" date="2008" name="Nucleic Acids Res.">
        <title>The rice annotation project database (RAP-DB): 2008 update.</title>
        <authorList>
            <consortium name="The rice annotation project (RAP)"/>
        </authorList>
    </citation>
    <scope>GENOME REANNOTATION</scope>
    <source>
        <strain>cv. Nipponbare</strain>
    </source>
</reference>
<reference key="4">
    <citation type="journal article" date="2013" name="Rice">
        <title>Improvement of the Oryza sativa Nipponbare reference genome using next generation sequence and optical map data.</title>
        <authorList>
            <person name="Kawahara Y."/>
            <person name="de la Bastide M."/>
            <person name="Hamilton J.P."/>
            <person name="Kanamori H."/>
            <person name="McCombie W.R."/>
            <person name="Ouyang S."/>
            <person name="Schwartz D.C."/>
            <person name="Tanaka T."/>
            <person name="Wu J."/>
            <person name="Zhou S."/>
            <person name="Childs K.L."/>
            <person name="Davidson R.M."/>
            <person name="Lin H."/>
            <person name="Quesada-Ocampo L."/>
            <person name="Vaillancourt B."/>
            <person name="Sakai H."/>
            <person name="Lee S.S."/>
            <person name="Kim J."/>
            <person name="Numa H."/>
            <person name="Itoh T."/>
            <person name="Buell C.R."/>
            <person name="Matsumoto T."/>
        </authorList>
    </citation>
    <scope>GENOME REANNOTATION</scope>
    <source>
        <strain>cv. Nipponbare</strain>
    </source>
</reference>
<reference key="5">
    <citation type="journal article" date="2005" name="PLoS Biol.">
        <title>The genomes of Oryza sativa: a history of duplications.</title>
        <authorList>
            <person name="Yu J."/>
            <person name="Wang J."/>
            <person name="Lin W."/>
            <person name="Li S."/>
            <person name="Li H."/>
            <person name="Zhou J."/>
            <person name="Ni P."/>
            <person name="Dong W."/>
            <person name="Hu S."/>
            <person name="Zeng C."/>
            <person name="Zhang J."/>
            <person name="Zhang Y."/>
            <person name="Li R."/>
            <person name="Xu Z."/>
            <person name="Li S."/>
            <person name="Li X."/>
            <person name="Zheng H."/>
            <person name="Cong L."/>
            <person name="Lin L."/>
            <person name="Yin J."/>
            <person name="Geng J."/>
            <person name="Li G."/>
            <person name="Shi J."/>
            <person name="Liu J."/>
            <person name="Lv H."/>
            <person name="Li J."/>
            <person name="Wang J."/>
            <person name="Deng Y."/>
            <person name="Ran L."/>
            <person name="Shi X."/>
            <person name="Wang X."/>
            <person name="Wu Q."/>
            <person name="Li C."/>
            <person name="Ren X."/>
            <person name="Wang J."/>
            <person name="Wang X."/>
            <person name="Li D."/>
            <person name="Liu D."/>
            <person name="Zhang X."/>
            <person name="Ji Z."/>
            <person name="Zhao W."/>
            <person name="Sun Y."/>
            <person name="Zhang Z."/>
            <person name="Bao J."/>
            <person name="Han Y."/>
            <person name="Dong L."/>
            <person name="Ji J."/>
            <person name="Chen P."/>
            <person name="Wu S."/>
            <person name="Liu J."/>
            <person name="Xiao Y."/>
            <person name="Bu D."/>
            <person name="Tan J."/>
            <person name="Yang L."/>
            <person name="Ye C."/>
            <person name="Zhang J."/>
            <person name="Xu J."/>
            <person name="Zhou Y."/>
            <person name="Yu Y."/>
            <person name="Zhang B."/>
            <person name="Zhuang S."/>
            <person name="Wei H."/>
            <person name="Liu B."/>
            <person name="Lei M."/>
            <person name="Yu H."/>
            <person name="Li Y."/>
            <person name="Xu H."/>
            <person name="Wei S."/>
            <person name="He X."/>
            <person name="Fang L."/>
            <person name="Zhang Z."/>
            <person name="Zhang Y."/>
            <person name="Huang X."/>
            <person name="Su Z."/>
            <person name="Tong W."/>
            <person name="Li J."/>
            <person name="Tong Z."/>
            <person name="Li S."/>
            <person name="Ye J."/>
            <person name="Wang L."/>
            <person name="Fang L."/>
            <person name="Lei T."/>
            <person name="Chen C.-S."/>
            <person name="Chen H.-C."/>
            <person name="Xu Z."/>
            <person name="Li H."/>
            <person name="Huang H."/>
            <person name="Zhang F."/>
            <person name="Xu H."/>
            <person name="Li N."/>
            <person name="Zhao C."/>
            <person name="Li S."/>
            <person name="Dong L."/>
            <person name="Huang Y."/>
            <person name="Li L."/>
            <person name="Xi Y."/>
            <person name="Qi Q."/>
            <person name="Li W."/>
            <person name="Zhang B."/>
            <person name="Hu W."/>
            <person name="Zhang Y."/>
            <person name="Tian X."/>
            <person name="Jiao Y."/>
            <person name="Liang X."/>
            <person name="Jin J."/>
            <person name="Gao L."/>
            <person name="Zheng W."/>
            <person name="Hao B."/>
            <person name="Liu S.-M."/>
            <person name="Wang W."/>
            <person name="Yuan L."/>
            <person name="Cao M."/>
            <person name="McDermott J."/>
            <person name="Samudrala R."/>
            <person name="Wang J."/>
            <person name="Wong G.K.-S."/>
            <person name="Yang H."/>
        </authorList>
    </citation>
    <scope>NUCLEOTIDE SEQUENCE [LARGE SCALE GENOMIC DNA]</scope>
    <source>
        <strain>cv. Nipponbare</strain>
    </source>
</reference>
<reference key="6">
    <citation type="journal article" date="2003" name="Science">
        <title>Collection, mapping, and annotation of over 28,000 cDNA clones from japonica rice.</title>
        <authorList>
            <consortium name="The rice full-length cDNA consortium"/>
        </authorList>
    </citation>
    <scope>NUCLEOTIDE SEQUENCE [LARGE SCALE MRNA]</scope>
    <source>
        <strain>cv. Nipponbare</strain>
    </source>
</reference>
<reference key="7">
    <citation type="journal article" date="2005" name="Plant Physiol.">
        <title>Phylogenetic analyses identify 10 classes of the protein disulfide isomerase family in plants, including single-domain protein disulfide isomerase-related proteins.</title>
        <authorList>
            <person name="Houston N.L."/>
            <person name="Fan C."/>
            <person name="Xiang J.Q."/>
            <person name="Schulze J.M."/>
            <person name="Jung R."/>
            <person name="Boston R.S."/>
        </authorList>
    </citation>
    <scope>GENE FAMILY</scope>
    <scope>NOMENCLATURE</scope>
</reference>
<reference key="8">
    <citation type="journal article" date="2010" name="BMC Plant Biol.">
        <title>The protein disulfide isomerase gene family in bread wheat (T. aestivum L.).</title>
        <authorList>
            <person name="d'Aloisio E."/>
            <person name="Paolacci A.R."/>
            <person name="Dhanapal A.P."/>
            <person name="Tanzarella O.A."/>
            <person name="Porceddu E."/>
            <person name="Ciaffi M."/>
        </authorList>
    </citation>
    <scope>GENE FAMILY</scope>
    <scope>NOMENCLATURE</scope>
</reference>
<keyword id="KW-1015">Disulfide bond</keyword>
<keyword id="KW-0256">Endoplasmic reticulum</keyword>
<keyword id="KW-0325">Glycoprotein</keyword>
<keyword id="KW-0413">Isomerase</keyword>
<keyword id="KW-0676">Redox-active center</keyword>
<keyword id="KW-1185">Reference proteome</keyword>
<keyword id="KW-0677">Repeat</keyword>
<keyword id="KW-0732">Signal</keyword>
<proteinExistence type="evidence at transcript level"/>
<dbReference type="EC" id="5.3.4.1"/>
<dbReference type="EMBL" id="AP006851">
    <property type="protein sequence ID" value="BAD38565.1"/>
    <property type="molecule type" value="Genomic_DNA"/>
</dbReference>
<dbReference type="EMBL" id="AP008208">
    <property type="protein sequence ID" value="BAF07493.1"/>
    <property type="molecule type" value="Genomic_DNA"/>
</dbReference>
<dbReference type="EMBL" id="AP014958">
    <property type="protein sequence ID" value="BAS76496.1"/>
    <property type="molecule type" value="Genomic_DNA"/>
</dbReference>
<dbReference type="EMBL" id="CM000139">
    <property type="protein sequence ID" value="EEE56114.1"/>
    <property type="molecule type" value="Genomic_DNA"/>
</dbReference>
<dbReference type="EMBL" id="AK071514">
    <property type="protein sequence ID" value="BAG92533.1"/>
    <property type="molecule type" value="mRNA"/>
</dbReference>
<dbReference type="RefSeq" id="XP_015627045.1">
    <property type="nucleotide sequence ID" value="XM_015771559.1"/>
</dbReference>
<dbReference type="SMR" id="Q67IX6"/>
<dbReference type="FunCoup" id="Q67IX6">
    <property type="interactions" value="2873"/>
</dbReference>
<dbReference type="STRING" id="39947.Q67IX6"/>
<dbReference type="GlyCosmos" id="Q67IX6">
    <property type="glycosylation" value="3 sites, No reported glycans"/>
</dbReference>
<dbReference type="PaxDb" id="39947-Q67IX6"/>
<dbReference type="EnsemblPlants" id="Os02t0100100-01">
    <property type="protein sequence ID" value="Os02t0100100-01"/>
    <property type="gene ID" value="Os02g0100100"/>
</dbReference>
<dbReference type="Gramene" id="Os02t0100100-01">
    <property type="protein sequence ID" value="Os02t0100100-01"/>
    <property type="gene ID" value="Os02g0100100"/>
</dbReference>
<dbReference type="KEGG" id="dosa:Os02g0100100"/>
<dbReference type="eggNOG" id="KOG0190">
    <property type="taxonomic scope" value="Eukaryota"/>
</dbReference>
<dbReference type="HOGENOM" id="CLU_025879_7_0_1"/>
<dbReference type="InParanoid" id="Q67IX6"/>
<dbReference type="OMA" id="REDYVWS"/>
<dbReference type="OrthoDB" id="427280at2759"/>
<dbReference type="Proteomes" id="UP000000763">
    <property type="component" value="Chromosome 2"/>
</dbReference>
<dbReference type="Proteomes" id="UP000007752">
    <property type="component" value="Chromosome 2"/>
</dbReference>
<dbReference type="Proteomes" id="UP000059680">
    <property type="component" value="Chromosome 2"/>
</dbReference>
<dbReference type="GO" id="GO:0005783">
    <property type="term" value="C:endoplasmic reticulum"/>
    <property type="evidence" value="ECO:0000318"/>
    <property type="project" value="GO_Central"/>
</dbReference>
<dbReference type="GO" id="GO:0005788">
    <property type="term" value="C:endoplasmic reticulum lumen"/>
    <property type="evidence" value="ECO:0007669"/>
    <property type="project" value="UniProtKB-SubCell"/>
</dbReference>
<dbReference type="GO" id="GO:0003756">
    <property type="term" value="F:protein disulfide isomerase activity"/>
    <property type="evidence" value="ECO:0000318"/>
    <property type="project" value="GO_Central"/>
</dbReference>
<dbReference type="GO" id="GO:0006457">
    <property type="term" value="P:protein folding"/>
    <property type="evidence" value="ECO:0000318"/>
    <property type="project" value="GO_Central"/>
</dbReference>
<dbReference type="GO" id="GO:0034976">
    <property type="term" value="P:response to endoplasmic reticulum stress"/>
    <property type="evidence" value="ECO:0000318"/>
    <property type="project" value="GO_Central"/>
</dbReference>
<dbReference type="CDD" id="cd02961">
    <property type="entry name" value="PDI_a_family"/>
    <property type="match status" value="1"/>
</dbReference>
<dbReference type="CDD" id="cd02995">
    <property type="entry name" value="PDI_a_PDI_a'_C"/>
    <property type="match status" value="1"/>
</dbReference>
<dbReference type="CDD" id="cd02982">
    <property type="entry name" value="PDI_b'_family"/>
    <property type="match status" value="1"/>
</dbReference>
<dbReference type="CDD" id="cd02981">
    <property type="entry name" value="PDI_b_family"/>
    <property type="match status" value="1"/>
</dbReference>
<dbReference type="FunFam" id="3.40.30.10:FF:000023">
    <property type="entry name" value="Protein disulfide-isomerase"/>
    <property type="match status" value="1"/>
</dbReference>
<dbReference type="FunFam" id="3.40.30.10:FF:000109">
    <property type="entry name" value="Protein disulfide-isomerase"/>
    <property type="match status" value="1"/>
</dbReference>
<dbReference type="FunFam" id="3.40.30.10:FF:000134">
    <property type="entry name" value="Protein disulfide-isomerase"/>
    <property type="match status" value="1"/>
</dbReference>
<dbReference type="FunFam" id="3.40.30.10:FF:000042">
    <property type="entry name" value="protein disulfide-isomerase A2"/>
    <property type="match status" value="1"/>
</dbReference>
<dbReference type="Gene3D" id="3.40.30.10">
    <property type="entry name" value="Glutaredoxin"/>
    <property type="match status" value="4"/>
</dbReference>
<dbReference type="InterPro" id="IPR005788">
    <property type="entry name" value="PDI_thioredoxin-like_dom"/>
</dbReference>
<dbReference type="InterPro" id="IPR005792">
    <property type="entry name" value="Prot_disulphide_isomerase"/>
</dbReference>
<dbReference type="InterPro" id="IPR036249">
    <property type="entry name" value="Thioredoxin-like_sf"/>
</dbReference>
<dbReference type="InterPro" id="IPR017937">
    <property type="entry name" value="Thioredoxin_CS"/>
</dbReference>
<dbReference type="InterPro" id="IPR013766">
    <property type="entry name" value="Thioredoxin_domain"/>
</dbReference>
<dbReference type="NCBIfam" id="TIGR01130">
    <property type="entry name" value="ER_PDI_fam"/>
    <property type="match status" value="1"/>
</dbReference>
<dbReference type="NCBIfam" id="TIGR01126">
    <property type="entry name" value="pdi_dom"/>
    <property type="match status" value="1"/>
</dbReference>
<dbReference type="PANTHER" id="PTHR18929">
    <property type="entry name" value="PROTEIN DISULFIDE ISOMERASE"/>
    <property type="match status" value="1"/>
</dbReference>
<dbReference type="PANTHER" id="PTHR18929:SF246">
    <property type="entry name" value="PROTEIN DISULFIDE ISOMERASE-LIKE 1-4"/>
    <property type="match status" value="1"/>
</dbReference>
<dbReference type="Pfam" id="PF00085">
    <property type="entry name" value="Thioredoxin"/>
    <property type="match status" value="2"/>
</dbReference>
<dbReference type="Pfam" id="PF13848">
    <property type="entry name" value="Thioredoxin_6"/>
    <property type="match status" value="1"/>
</dbReference>
<dbReference type="PRINTS" id="PR00421">
    <property type="entry name" value="THIOREDOXIN"/>
</dbReference>
<dbReference type="SUPFAM" id="SSF52833">
    <property type="entry name" value="Thioredoxin-like"/>
    <property type="match status" value="4"/>
</dbReference>
<dbReference type="PROSITE" id="PS00014">
    <property type="entry name" value="ER_TARGET"/>
    <property type="match status" value="1"/>
</dbReference>
<dbReference type="PROSITE" id="PS00194">
    <property type="entry name" value="THIOREDOXIN_1"/>
    <property type="match status" value="2"/>
</dbReference>
<dbReference type="PROSITE" id="PS51352">
    <property type="entry name" value="THIOREDOXIN_2"/>
    <property type="match status" value="2"/>
</dbReference>
<name>PDI14_ORYSJ</name>
<gene>
    <name type="primary">PDIL1-4</name>
    <name type="synonym">PDIL2-1</name>
    <name type="ordered locus">Os02g0100100</name>
    <name type="ordered locus">LOC_Os02g01010</name>
    <name type="ORF">OsJ_04977</name>
    <name type="ORF">OSJNOa183H18.2</name>
</gene>